<keyword id="KW-1003">Cell membrane</keyword>
<keyword id="KW-1015">Disulfide bond</keyword>
<keyword id="KW-0297">G-protein coupled receptor</keyword>
<keyword id="KW-0325">Glycoprotein</keyword>
<keyword id="KW-0472">Membrane</keyword>
<keyword id="KW-0675">Receptor</keyword>
<keyword id="KW-0807">Transducer</keyword>
<keyword id="KW-0812">Transmembrane</keyword>
<keyword id="KW-1133">Transmembrane helix</keyword>
<evidence type="ECO:0000255" key="1"/>
<evidence type="ECO:0000255" key="2">
    <source>
        <dbReference type="PROSITE-ProRule" id="PRU00521"/>
    </source>
</evidence>
<evidence type="ECO:0000256" key="3">
    <source>
        <dbReference type="SAM" id="MobiDB-lite"/>
    </source>
</evidence>
<organism>
    <name type="scientific">Lymnaea stagnalis</name>
    <name type="common">Great pond snail</name>
    <name type="synonym">Helix stagnalis</name>
    <dbReference type="NCBI Taxonomy" id="6523"/>
    <lineage>
        <taxon>Eukaryota</taxon>
        <taxon>Metazoa</taxon>
        <taxon>Spiralia</taxon>
        <taxon>Lophotrochozoa</taxon>
        <taxon>Mollusca</taxon>
        <taxon>Gastropoda</taxon>
        <taxon>Heterobranchia</taxon>
        <taxon>Euthyneura</taxon>
        <taxon>Panpulmonata</taxon>
        <taxon>Hygrophila</taxon>
        <taxon>Lymnaeoidea</taxon>
        <taxon>Lymnaeidae</taxon>
        <taxon>Lymnaea</taxon>
    </lineage>
</organism>
<protein>
    <recommendedName>
        <fullName>Octopamine receptor 1</fullName>
        <shortName>OA1</shortName>
    </recommendedName>
</protein>
<proteinExistence type="evidence at protein level"/>
<comment type="function">
    <text>G-protein coupled receptor for octopamine (OA), which is a neurotransmitter, neurohormone, and neuromodulator in invertebrates. Activation of this receptor by octopamine induces an increase in both inositol phosphates and cyclic AMP. The coupling to adenylyl cyclase seems to be less efficient than the coupling to phospholipase C. The rank order of potency for agonists is p-synephrine &gt;= clonidine &gt; p-octopamine = xylometazoline = phenylephrine = oxymetazoline &gt; B-HT920 &gt; serotonin = p-tyramine &gt; epinephrine &gt; norepinephrine &gt; methoxamine = dopamine = histamine. For antagonists, the rank order is yohimbine &gt; chlopromazine / spiperone &gt; phentolamine &gt; mianserine &gt; rauwolscine &gt; prazosin &gt; alprenolol / propanolol &gt; pindolol.</text>
</comment>
<comment type="subcellular location">
    <subcellularLocation>
        <location>Cell membrane</location>
        <topology>Multi-pass membrane protein</topology>
    </subcellularLocation>
</comment>
<comment type="tissue specificity">
    <text>Expressed in the central nervous system.</text>
</comment>
<comment type="similarity">
    <text evidence="2">Belongs to the G-protein coupled receptor 1 family.</text>
</comment>
<accession>O77408</accession>
<feature type="chain" id="PRO_0000069956" description="Octopamine receptor 1">
    <location>
        <begin position="1"/>
        <end position="638"/>
    </location>
</feature>
<feature type="topological domain" description="Extracellular" evidence="1">
    <location>
        <begin position="1"/>
        <end position="28"/>
    </location>
</feature>
<feature type="transmembrane region" description="Helical; Name=1" evidence="1">
    <location>
        <begin position="29"/>
        <end position="53"/>
    </location>
</feature>
<feature type="topological domain" description="Cytoplasmic" evidence="1">
    <location>
        <begin position="54"/>
        <end position="64"/>
    </location>
</feature>
<feature type="transmembrane region" description="Helical; Name=2" evidence="1">
    <location>
        <begin position="65"/>
        <end position="87"/>
    </location>
</feature>
<feature type="topological domain" description="Extracellular" evidence="1">
    <location>
        <begin position="88"/>
        <end position="102"/>
    </location>
</feature>
<feature type="transmembrane region" description="Helical; Name=3" evidence="1">
    <location>
        <begin position="103"/>
        <end position="124"/>
    </location>
</feature>
<feature type="topological domain" description="Cytoplasmic" evidence="1">
    <location>
        <begin position="125"/>
        <end position="147"/>
    </location>
</feature>
<feature type="transmembrane region" description="Helical; Name=4" evidence="1">
    <location>
        <begin position="148"/>
        <end position="167"/>
    </location>
</feature>
<feature type="topological domain" description="Extracellular" evidence="1">
    <location>
        <begin position="168"/>
        <end position="239"/>
    </location>
</feature>
<feature type="transmembrane region" description="Helical; Name=5" evidence="1">
    <location>
        <begin position="240"/>
        <end position="259"/>
    </location>
</feature>
<feature type="topological domain" description="Cytoplasmic" evidence="1">
    <location>
        <begin position="260"/>
        <end position="520"/>
    </location>
</feature>
<feature type="transmembrane region" description="Helical; Name=6" evidence="1">
    <location>
        <begin position="521"/>
        <end position="545"/>
    </location>
</feature>
<feature type="topological domain" description="Extracellular" evidence="1">
    <location>
        <begin position="546"/>
        <end position="551"/>
    </location>
</feature>
<feature type="transmembrane region" description="Helical; Name=7" evidence="1">
    <location>
        <begin position="552"/>
        <end position="575"/>
    </location>
</feature>
<feature type="topological domain" description="Cytoplasmic" evidence="1">
    <location>
        <begin position="576"/>
        <end position="638"/>
    </location>
</feature>
<feature type="region of interest" description="Disordered" evidence="3">
    <location>
        <begin position="618"/>
        <end position="638"/>
    </location>
</feature>
<feature type="glycosylation site" description="N-linked (GlcNAc...) asparagine" evidence="1">
    <location>
        <position position="178"/>
    </location>
</feature>
<feature type="glycosylation site" description="N-linked (GlcNAc...) asparagine" evidence="1">
    <location>
        <position position="207"/>
    </location>
</feature>
<feature type="glycosylation site" description="N-linked (GlcNAc...) asparagine" evidence="1">
    <location>
        <position position="215"/>
    </location>
</feature>
<feature type="disulfide bond" evidence="2">
    <location>
        <begin position="101"/>
        <end position="230"/>
    </location>
</feature>
<reference key="1">
    <citation type="journal article" date="1997" name="Mol. Pharmacol.">
        <title>Molecular cloning and pharmacological characterization of a molluscan octopamine receptor.</title>
        <authorList>
            <person name="Gerhardt C.C."/>
            <person name="Bakker R.A."/>
            <person name="Piek G.J."/>
            <person name="Planta R.J."/>
            <person name="Vreugdenhil E."/>
            <person name="Leysen J.E."/>
            <person name="van Heerikhuizen H."/>
        </authorList>
    </citation>
    <scope>NUCLEOTIDE SEQUENCE [MRNA]</scope>
    <scope>CHARACTERIZATION</scope>
    <source>
        <tissue>CNS</tissue>
    </source>
</reference>
<name>OAR1_LYMST</name>
<dbReference type="EMBL" id="U62771">
    <property type="protein sequence ID" value="AAC61296.1"/>
    <property type="molecule type" value="mRNA"/>
</dbReference>
<dbReference type="SMR" id="O77408"/>
<dbReference type="GO" id="GO:0005886">
    <property type="term" value="C:plasma membrane"/>
    <property type="evidence" value="ECO:0007669"/>
    <property type="project" value="UniProtKB-SubCell"/>
</dbReference>
<dbReference type="GO" id="GO:0045202">
    <property type="term" value="C:synapse"/>
    <property type="evidence" value="ECO:0007669"/>
    <property type="project" value="GOC"/>
</dbReference>
<dbReference type="GO" id="GO:0016907">
    <property type="term" value="F:G protein-coupled acetylcholine receptor activity"/>
    <property type="evidence" value="ECO:0007669"/>
    <property type="project" value="InterPro"/>
</dbReference>
<dbReference type="CDD" id="cd15063">
    <property type="entry name" value="7tmA_Octopamine_R"/>
    <property type="match status" value="1"/>
</dbReference>
<dbReference type="Gene3D" id="1.20.1070.10">
    <property type="entry name" value="Rhodopsin 7-helix transmembrane proteins"/>
    <property type="match status" value="2"/>
</dbReference>
<dbReference type="InterPro" id="IPR000276">
    <property type="entry name" value="GPCR_Rhodpsn"/>
</dbReference>
<dbReference type="InterPro" id="IPR017452">
    <property type="entry name" value="GPCR_Rhodpsn_7TM"/>
</dbReference>
<dbReference type="InterPro" id="IPR000995">
    <property type="entry name" value="Musac_Ach_rcpt"/>
</dbReference>
<dbReference type="PANTHER" id="PTHR24248">
    <property type="entry name" value="ADRENERGIC RECEPTOR-RELATED G-PROTEIN COUPLED RECEPTOR"/>
    <property type="match status" value="1"/>
</dbReference>
<dbReference type="PANTHER" id="PTHR24248:SF174">
    <property type="entry name" value="TYRAMINE_OCTOPAMINE RECEPTOR"/>
    <property type="match status" value="1"/>
</dbReference>
<dbReference type="Pfam" id="PF00001">
    <property type="entry name" value="7tm_1"/>
    <property type="match status" value="2"/>
</dbReference>
<dbReference type="PRINTS" id="PR00237">
    <property type="entry name" value="GPCRRHODOPSN"/>
</dbReference>
<dbReference type="PRINTS" id="PR00243">
    <property type="entry name" value="MUSCARINICR"/>
</dbReference>
<dbReference type="SMART" id="SM01381">
    <property type="entry name" value="7TM_GPCR_Srsx"/>
    <property type="match status" value="1"/>
</dbReference>
<dbReference type="SUPFAM" id="SSF81321">
    <property type="entry name" value="Family A G protein-coupled receptor-like"/>
    <property type="match status" value="1"/>
</dbReference>
<dbReference type="PROSITE" id="PS00237">
    <property type="entry name" value="G_PROTEIN_RECEP_F1_1"/>
    <property type="match status" value="1"/>
</dbReference>
<dbReference type="PROSITE" id="PS50262">
    <property type="entry name" value="G_PROTEIN_RECEP_F1_2"/>
    <property type="match status" value="1"/>
</dbReference>
<sequence length="638" mass="70001">MSRDIFMKRLRLHLLFDEVAMVTHIVGDVLSSVLLCAVVLLVLVGNTLVVAAVATSRKLRTVTNVFIVNLACADLLLGVLVLPFSAVNEIKDVWIFGHVWCQVWLAVDVWLCTASILNLCCISLDRYLAITRPIRYPGLMSAKRAKTLVAGVWLFSFVICCPPLIGWNDGGDGIMDYNGTTATPIPVTTTQTPVTGRDDVLCDNGFNYSTNSNMNTTCTYSGDSSLSTTCELTNSRGYRIYAALGSFFIPMLVMVFFYLQIYRAAVKTISAYAKGELKTKYSVRENGSKTNSVTLRIHRGGRGPSTGSSVYRHGSTYGGSAAGAATREGCGDKDAAGGRRFGRQEMDSHLPVRKCRSSDASLVTLTGLKCEIIDNGNAKHGPISELIKGRGKSFFWRKEKKRSVGGERESFENSTRNGRSTRAKLCGGRCLAIETDICSSGECSPRTKRIKEHARATQHNSLPVTPSLSSQNEETDAVFVRGTSNSEYKPRRSRLSAHKPGHAMRLHMQKFNREKKAAKTLAIIVGAFIMCWMPFFTIYLVGAFCENCISPIVFSVAFWLGYCNSAMNPCVYALFSRDFRFAFRKLLTCSCKAWSKNRSFRPQTSDVPAIQLHCATQDDAKSSSDIGPTASGGNGGYT</sequence>